<name>MUC20_HUMAN</name>
<comment type="function">
    <text evidence="7">May regulate MET signaling cascade. Seems to decrease hepatocyte growth factor (HGF)-induced transient MAPK activation. Blocks GRB2 recruitment to MET thus suppressing the GRB2-RAS pathway. Inhibits HGF-induced proliferation of MMP1 and MMP9 expression.</text>
</comment>
<comment type="subunit">
    <text evidence="7">Interacts with MET; oligomerization increases affinity for MET.</text>
</comment>
<comment type="subcellular location">
    <subcellularLocation>
        <location evidence="12">Secreted</location>
    </subcellularLocation>
    <subcellularLocation>
        <location evidence="5">Apical cell membrane</location>
    </subcellularLocation>
    <subcellularLocation>
        <location evidence="5">Basolateral cell membrane</location>
    </subcellularLocation>
    <subcellularLocation>
        <location evidence="5">Cell projection</location>
        <location evidence="5">Microvillus membrane</location>
    </subcellularLocation>
</comment>
<comment type="alternative products">
    <event type="alternative splicing"/>
    <isoform>
        <id>Q8N307-1</id>
        <name>1</name>
        <name>hMUC20-L</name>
        <sequence type="displayed"/>
    </isoform>
    <isoform>
        <id>Q8N307-3</id>
        <name>2</name>
        <name>hMUC20-S</name>
        <sequence type="described" ref="VSP_030980"/>
    </isoform>
</comment>
<comment type="tissue specificity">
    <text evidence="5 10">Highly expressed in kidney, moderately in placenta, lung, prostate, liver, and digestive system. In the kidney, localized in the proximal tubules but not in the glomerulus or distal tubules. Detected in most of the male urogenital tract epithelia, with the exception of epididymis.</text>
</comment>
<comment type="polymorphism">
    <text>The region encoding the tandem repeats is highly polymorphic. Divergence of the number of tandem repeats was seen in different cDNA libraries.</text>
</comment>
<comment type="sequence caution" evidence="12">
    <conflict type="frameshift">
        <sequence resource="EMBL-CDS" id="AAQ88814"/>
    </conflict>
</comment>
<comment type="sequence caution" evidence="12">
    <conflict type="miscellaneous discrepancy">
        <sequence resource="EMBL-CDS" id="BAA92597"/>
    </conflict>
    <text>Dubious isoform. Probable cloning artifact.</text>
</comment>
<comment type="online information" name="Mucin database">
    <link uri="http://www.medkem.gu.se/mucinbiology/databases/"/>
</comment>
<gene>
    <name type="primary">MUC20</name>
    <name type="synonym">KIAA1359</name>
    <name type="ORF">UNQ2782/PRO7170</name>
</gene>
<accession>Q8N307</accession>
<accession>Q6UX97</accession>
<accession>Q76I83</accession>
<accession>Q76I85</accession>
<accession>Q86ST8</accession>
<accession>Q8NBY6</accession>
<accession>Q96KA1</accession>
<accession>Q9P2I8</accession>
<feature type="signal peptide" evidence="1">
    <location>
        <begin position="1"/>
        <end position="25"/>
    </location>
</feature>
<feature type="chain" id="PRO_0000317469" description="Mucin-20">
    <location>
        <begin position="26"/>
        <end position="709"/>
    </location>
</feature>
<feature type="repeat" description="1" evidence="9">
    <location>
        <begin position="173"/>
        <end position="192"/>
    </location>
</feature>
<feature type="repeat" description="2" evidence="9">
    <location>
        <begin position="193"/>
        <end position="211"/>
    </location>
</feature>
<feature type="repeat" description="3" evidence="9">
    <location>
        <begin position="212"/>
        <end position="230"/>
    </location>
</feature>
<feature type="repeat" description="4" evidence="9">
    <location>
        <begin position="231"/>
        <end position="249"/>
    </location>
</feature>
<feature type="repeat" description="5" evidence="9">
    <location>
        <begin position="250"/>
        <end position="268"/>
    </location>
</feature>
<feature type="repeat" description="6" evidence="9">
    <location>
        <begin position="269"/>
        <end position="287"/>
    </location>
</feature>
<feature type="repeat" description="7" evidence="9">
    <location>
        <begin position="288"/>
        <end position="306"/>
    </location>
</feature>
<feature type="repeat" description="8" evidence="9">
    <location>
        <begin position="307"/>
        <end position="325"/>
    </location>
</feature>
<feature type="repeat" description="9" evidence="9">
    <location>
        <begin position="326"/>
        <end position="344"/>
    </location>
</feature>
<feature type="repeat" description="10" evidence="9">
    <location>
        <begin position="345"/>
        <end position="363"/>
    </location>
</feature>
<feature type="repeat" description="11" evidence="9">
    <location>
        <begin position="364"/>
        <end position="382"/>
    </location>
</feature>
<feature type="repeat" description="12; approximate" evidence="9">
    <location>
        <begin position="383"/>
        <end position="400"/>
    </location>
</feature>
<feature type="region of interest" description="Disordered" evidence="2">
    <location>
        <begin position="57"/>
        <end position="92"/>
    </location>
</feature>
<feature type="region of interest" description="Disordered" evidence="2">
    <location>
        <begin position="170"/>
        <end position="403"/>
    </location>
</feature>
<feature type="region of interest" description="12 X 20 AA approximate tandem repeats of S-S-E-S-S-A-S-S-D-S-P-H-P-V-I-T-P-S-R-A">
    <location>
        <begin position="173"/>
        <end position="400"/>
    </location>
</feature>
<feature type="region of interest" description="Disordered" evidence="2">
    <location>
        <begin position="434"/>
        <end position="515"/>
    </location>
</feature>
<feature type="region of interest" description="Involved in oligomerization">
    <location>
        <begin position="450"/>
        <end position="656"/>
    </location>
</feature>
<feature type="region of interest" description="Disordered" evidence="2">
    <location>
        <begin position="583"/>
        <end position="657"/>
    </location>
</feature>
<feature type="region of interest" description="Interaction with MET" evidence="7">
    <location>
        <begin position="657"/>
        <end position="709"/>
    </location>
</feature>
<feature type="compositionally biased region" description="Polar residues" evidence="2">
    <location>
        <begin position="57"/>
        <end position="69"/>
    </location>
</feature>
<feature type="compositionally biased region" description="Basic and acidic residues" evidence="2">
    <location>
        <begin position="78"/>
        <end position="92"/>
    </location>
</feature>
<feature type="compositionally biased region" description="Low complexity" evidence="2">
    <location>
        <begin position="173"/>
        <end position="182"/>
    </location>
</feature>
<feature type="compositionally biased region" description="Low complexity" evidence="2">
    <location>
        <begin position="190"/>
        <end position="199"/>
    </location>
</feature>
<feature type="compositionally biased region" description="Low complexity" evidence="2">
    <location>
        <begin position="209"/>
        <end position="218"/>
    </location>
</feature>
<feature type="compositionally biased region" description="Low complexity" evidence="2">
    <location>
        <begin position="228"/>
        <end position="237"/>
    </location>
</feature>
<feature type="compositionally biased region" description="Low complexity" evidence="2">
    <location>
        <begin position="247"/>
        <end position="256"/>
    </location>
</feature>
<feature type="compositionally biased region" description="Low complexity" evidence="2">
    <location>
        <begin position="266"/>
        <end position="275"/>
    </location>
</feature>
<feature type="compositionally biased region" description="Low complexity" evidence="2">
    <location>
        <begin position="285"/>
        <end position="294"/>
    </location>
</feature>
<feature type="compositionally biased region" description="Low complexity" evidence="2">
    <location>
        <begin position="304"/>
        <end position="313"/>
    </location>
</feature>
<feature type="compositionally biased region" description="Low complexity" evidence="2">
    <location>
        <begin position="323"/>
        <end position="332"/>
    </location>
</feature>
<feature type="compositionally biased region" description="Low complexity" evidence="2">
    <location>
        <begin position="342"/>
        <end position="351"/>
    </location>
</feature>
<feature type="compositionally biased region" description="Low complexity" evidence="2">
    <location>
        <begin position="361"/>
        <end position="370"/>
    </location>
</feature>
<feature type="compositionally biased region" description="Low complexity" evidence="2">
    <location>
        <begin position="380"/>
        <end position="389"/>
    </location>
</feature>
<feature type="compositionally biased region" description="Polar residues" evidence="2">
    <location>
        <begin position="474"/>
        <end position="489"/>
    </location>
</feature>
<feature type="compositionally biased region" description="Low complexity" evidence="2">
    <location>
        <begin position="613"/>
        <end position="652"/>
    </location>
</feature>
<feature type="glycosylation site" description="N-linked (GlcNAc...) asparagine" evidence="1">
    <location>
        <position position="423"/>
    </location>
</feature>
<feature type="glycosylation site" description="N-linked (GlcNAc...) asparagine" evidence="1">
    <location>
        <position position="616"/>
    </location>
</feature>
<feature type="glycosylation site" description="N-linked (GlcNAc...) asparagine" evidence="1">
    <location>
        <position position="622"/>
    </location>
</feature>
<feature type="splice variant" id="VSP_030980" description="In isoform 2." evidence="11">
    <location>
        <begin position="1"/>
        <end position="35"/>
    </location>
</feature>
<feature type="sequence variant" id="VAR_038536" description="In dbSNP:rs7627924.">
    <original>C</original>
    <variation>S</variation>
    <location>
        <position position="3"/>
    </location>
</feature>
<feature type="sequence variant" id="VAR_038537" description="In dbSNP:rs1811139.">
    <original>V</original>
    <variation>G</variation>
    <location>
        <position position="18"/>
    </location>
</feature>
<feature type="sequence variant" id="VAR_054139">
    <location>
        <begin position="130"/>
        <end position="376"/>
    </location>
</feature>
<feature type="sequence variant" id="VAR_054140" evidence="4 5 6 8">
    <location>
        <begin position="184"/>
        <end position="354"/>
    </location>
</feature>
<feature type="sequence variant" id="VAR_054141" evidence="8">
    <location>
        <begin position="203"/>
        <end position="354"/>
    </location>
</feature>
<feature type="sequence variant" id="VAR_054142" evidence="3 5">
    <location>
        <begin position="241"/>
        <end position="354"/>
    </location>
</feature>
<feature type="sequence variant" id="VAR_038538" description="In dbSNP:rs2550232." evidence="4 5 6 8">
    <original>T</original>
    <variation>I</variation>
    <location>
        <position position="442"/>
    </location>
</feature>
<feature type="sequence variant" id="VAR_054143" evidence="6">
    <location>
        <begin position="483"/>
        <end position="533"/>
    </location>
</feature>
<feature type="sequence variant" id="VAR_056641" description="In dbSNP:rs3828410.">
    <original>G</original>
    <variation>R</variation>
    <location>
        <position position="514"/>
    </location>
</feature>
<feature type="sequence variant" id="VAR_038539" description="In dbSNP:rs3828408." evidence="8">
    <original>P</original>
    <variation>L</variation>
    <location>
        <position position="590"/>
    </location>
</feature>
<feature type="sequence variant" id="VAR_038540" description="In dbSNP:rs11923495.">
    <original>R</original>
    <variation>W</variation>
    <location>
        <position position="666"/>
    </location>
</feature>
<feature type="sequence variant" id="VAR_038541" description="In dbSNP:rs3762739.">
    <original>S</original>
    <variation>C</variation>
    <location>
        <position position="671"/>
    </location>
</feature>
<feature type="sequence conflict" description="In Ref. 5; AAH29267." evidence="12" ref="5">
    <original>I</original>
    <variation>V</variation>
    <location>
        <position position="75"/>
    </location>
</feature>
<feature type="sequence conflict" description="In Ref. 1; BAD06718/BAD06720, 2; AAQ88814, 3; BAB55035 and 5; AAH29267/AAH44243." evidence="12" ref="1 2 3 5">
    <original>R</original>
    <variation>E</variation>
    <location>
        <position position="136"/>
    </location>
</feature>
<feature type="sequence conflict" description="In Ref. 1; BAD06718/BAD06720, 2; AAQ88814, 3; BAB55035 and 5; AAH29267/AAH44243." evidence="12" ref="1 2 3 5">
    <original>S</original>
    <variation>G</variation>
    <location>
        <position position="182"/>
    </location>
</feature>
<feature type="sequence conflict" description="In Ref. 6; BAA92597." evidence="12" ref="6">
    <original>P</original>
    <variation>L</variation>
    <location>
        <position position="221"/>
    </location>
</feature>
<feature type="sequence conflict" description="In Ref. 3; BAB55035." evidence="12" ref="3">
    <original>T</original>
    <variation>A</variation>
    <location>
        <position position="407"/>
    </location>
</feature>
<feature type="sequence conflict" description="In Ref. 3; BAC11428." evidence="12" ref="3">
    <original>T</original>
    <variation>A</variation>
    <location>
        <position position="433"/>
    </location>
</feature>
<feature type="sequence conflict" description="In Ref. 5; AAH29267." evidence="12" ref="5">
    <original>L</original>
    <variation>P</variation>
    <location>
        <position position="444"/>
    </location>
</feature>
<feature type="sequence conflict" description="In Ref. 1; BAD06718/BAD06720, 2; AAQ88814, 3; BAC11428 and 5; AAH44243." evidence="12" ref="1 2 3 5">
    <original>D</original>
    <variation>H</variation>
    <location>
        <position position="493"/>
    </location>
</feature>
<feature type="sequence conflict" description="In Ref. 5; AAH29267." evidence="12" ref="5">
    <original>V</original>
    <variation>I</variation>
    <location>
        <position position="496"/>
    </location>
</feature>
<feature type="sequence conflict" description="In Ref. 5; AAH29267." evidence="12" ref="5">
    <original>AT</original>
    <variation>TI</variation>
    <location>
        <begin position="505"/>
        <end position="506"/>
    </location>
</feature>
<feature type="sequence conflict" description="In Ref. 5; AAH29267." evidence="12" ref="5">
    <original>VTVSR</original>
    <variation>ATG</variation>
    <location>
        <begin position="523"/>
        <end position="527"/>
    </location>
</feature>
<feature type="sequence conflict" description="In Ref. 5; AAH29267." evidence="12" ref="5">
    <original>M</original>
    <variation>T</variation>
    <location>
        <position position="592"/>
    </location>
</feature>
<feature type="sequence conflict" description="In Ref. 5; AAH29267." evidence="12" ref="5">
    <original>V</original>
    <variation>M</variation>
    <location>
        <position position="654"/>
    </location>
</feature>
<evidence type="ECO:0000255" key="1"/>
<evidence type="ECO:0000256" key="2">
    <source>
        <dbReference type="SAM" id="MobiDB-lite"/>
    </source>
</evidence>
<evidence type="ECO:0000269" key="3">
    <source>
    </source>
</evidence>
<evidence type="ECO:0000269" key="4">
    <source>
    </source>
</evidence>
<evidence type="ECO:0000269" key="5">
    <source>
    </source>
</evidence>
<evidence type="ECO:0000269" key="6">
    <source>
    </source>
</evidence>
<evidence type="ECO:0000269" key="7">
    <source>
    </source>
</evidence>
<evidence type="ECO:0000269" key="8">
    <source>
    </source>
</evidence>
<evidence type="ECO:0000269" key="9">
    <source>
    </source>
</evidence>
<evidence type="ECO:0000269" key="10">
    <source>
    </source>
</evidence>
<evidence type="ECO:0000303" key="11">
    <source>
    </source>
</evidence>
<evidence type="ECO:0000305" key="12"/>
<reference key="1">
    <citation type="journal article" date="2004" name="J. Biol. Chem.">
        <title>Molecular cloning, genomic structure, and expression analysis of MUC20, a novel mucin protein, up-regulated in injured kidney.</title>
        <authorList>
            <person name="Higuchi T."/>
            <person name="Orita T."/>
            <person name="Nakanishi S."/>
            <person name="Katsuya K."/>
            <person name="Watanabe H."/>
            <person name="Yamasaki Y."/>
            <person name="Waga I."/>
            <person name="Nanayama T."/>
            <person name="Yamamoto Y."/>
            <person name="Munger W."/>
            <person name="Sun H.-W."/>
            <person name="Falk R.J."/>
            <person name="Jennette J.C."/>
            <person name="Alcorta D.A."/>
            <person name="Li H."/>
            <person name="Yamamoto T."/>
            <person name="Saito Y."/>
            <person name="Nakamura M."/>
        </authorList>
    </citation>
    <scope>NUCLEOTIDE SEQUENCE [GENOMIC DNA / MRNA] (ISOFORMS 1 AND 2)</scope>
    <scope>VARIANTS 184-HIS--LEU-354 DEL; 241-HIS--LEU-354 DEL AND ILE-442</scope>
    <scope>POLYMORPHISM</scope>
    <scope>SUBCELLULAR LOCATION</scope>
    <scope>TISSUE SPECIFICITY</scope>
    <source>
        <tissue>Kidney</tissue>
    </source>
</reference>
<reference key="2">
    <citation type="journal article" date="2003" name="Genome Res.">
        <title>The secreted protein discovery initiative (SPDI), a large-scale effort to identify novel human secreted and transmembrane proteins: a bioinformatics assessment.</title>
        <authorList>
            <person name="Clark H.F."/>
            <person name="Gurney A.L."/>
            <person name="Abaya E."/>
            <person name="Baker K."/>
            <person name="Baldwin D.T."/>
            <person name="Brush J."/>
            <person name="Chen J."/>
            <person name="Chow B."/>
            <person name="Chui C."/>
            <person name="Crowley C."/>
            <person name="Currell B."/>
            <person name="Deuel B."/>
            <person name="Dowd P."/>
            <person name="Eaton D."/>
            <person name="Foster J.S."/>
            <person name="Grimaldi C."/>
            <person name="Gu Q."/>
            <person name="Hass P.E."/>
            <person name="Heldens S."/>
            <person name="Huang A."/>
            <person name="Kim H.S."/>
            <person name="Klimowski L."/>
            <person name="Jin Y."/>
            <person name="Johnson S."/>
            <person name="Lee J."/>
            <person name="Lewis L."/>
            <person name="Liao D."/>
            <person name="Mark M.R."/>
            <person name="Robbie E."/>
            <person name="Sanchez C."/>
            <person name="Schoenfeld J."/>
            <person name="Seshagiri S."/>
            <person name="Simmons L."/>
            <person name="Singh J."/>
            <person name="Smith V."/>
            <person name="Stinson J."/>
            <person name="Vagts A."/>
            <person name="Vandlen R.L."/>
            <person name="Watanabe C."/>
            <person name="Wieand D."/>
            <person name="Woods K."/>
            <person name="Xie M.-H."/>
            <person name="Yansura D.G."/>
            <person name="Yi S."/>
            <person name="Yu G."/>
            <person name="Yuan J."/>
            <person name="Zhang M."/>
            <person name="Zhang Z."/>
            <person name="Goddard A.D."/>
            <person name="Wood W.I."/>
            <person name="Godowski P.J."/>
            <person name="Gray A.M."/>
        </authorList>
    </citation>
    <scope>NUCLEOTIDE SEQUENCE [LARGE SCALE MRNA] (ISOFORM 1)</scope>
    <scope>VARIANTS 184-HIS--LEU-354 DEL AND ILE-442</scope>
</reference>
<reference key="3">
    <citation type="journal article" date="2004" name="Nat. Genet.">
        <title>Complete sequencing and characterization of 21,243 full-length human cDNAs.</title>
        <authorList>
            <person name="Ota T."/>
            <person name="Suzuki Y."/>
            <person name="Nishikawa T."/>
            <person name="Otsuki T."/>
            <person name="Sugiyama T."/>
            <person name="Irie R."/>
            <person name="Wakamatsu A."/>
            <person name="Hayashi K."/>
            <person name="Sato H."/>
            <person name="Nagai K."/>
            <person name="Kimura K."/>
            <person name="Makita H."/>
            <person name="Sekine M."/>
            <person name="Obayashi M."/>
            <person name="Nishi T."/>
            <person name="Shibahara T."/>
            <person name="Tanaka T."/>
            <person name="Ishii S."/>
            <person name="Yamamoto J."/>
            <person name="Saito K."/>
            <person name="Kawai Y."/>
            <person name="Isono Y."/>
            <person name="Nakamura Y."/>
            <person name="Nagahari K."/>
            <person name="Murakami K."/>
            <person name="Yasuda T."/>
            <person name="Iwayanagi T."/>
            <person name="Wagatsuma M."/>
            <person name="Shiratori A."/>
            <person name="Sudo H."/>
            <person name="Hosoiri T."/>
            <person name="Kaku Y."/>
            <person name="Kodaira H."/>
            <person name="Kondo H."/>
            <person name="Sugawara M."/>
            <person name="Takahashi M."/>
            <person name="Kanda K."/>
            <person name="Yokoi T."/>
            <person name="Furuya T."/>
            <person name="Kikkawa E."/>
            <person name="Omura Y."/>
            <person name="Abe K."/>
            <person name="Kamihara K."/>
            <person name="Katsuta N."/>
            <person name="Sato K."/>
            <person name="Tanikawa M."/>
            <person name="Yamazaki M."/>
            <person name="Ninomiya K."/>
            <person name="Ishibashi T."/>
            <person name="Yamashita H."/>
            <person name="Murakawa K."/>
            <person name="Fujimori K."/>
            <person name="Tanai H."/>
            <person name="Kimata M."/>
            <person name="Watanabe M."/>
            <person name="Hiraoka S."/>
            <person name="Chiba Y."/>
            <person name="Ishida S."/>
            <person name="Ono Y."/>
            <person name="Takiguchi S."/>
            <person name="Watanabe S."/>
            <person name="Yosida M."/>
            <person name="Hotuta T."/>
            <person name="Kusano J."/>
            <person name="Kanehori K."/>
            <person name="Takahashi-Fujii A."/>
            <person name="Hara H."/>
            <person name="Tanase T.-O."/>
            <person name="Nomura Y."/>
            <person name="Togiya S."/>
            <person name="Komai F."/>
            <person name="Hara R."/>
            <person name="Takeuchi K."/>
            <person name="Arita M."/>
            <person name="Imose N."/>
            <person name="Musashino K."/>
            <person name="Yuuki H."/>
            <person name="Oshima A."/>
            <person name="Sasaki N."/>
            <person name="Aotsuka S."/>
            <person name="Yoshikawa Y."/>
            <person name="Matsunawa H."/>
            <person name="Ichihara T."/>
            <person name="Shiohata N."/>
            <person name="Sano S."/>
            <person name="Moriya S."/>
            <person name="Momiyama H."/>
            <person name="Satoh N."/>
            <person name="Takami S."/>
            <person name="Terashima Y."/>
            <person name="Suzuki O."/>
            <person name="Nakagawa S."/>
            <person name="Senoh A."/>
            <person name="Mizoguchi H."/>
            <person name="Goto Y."/>
            <person name="Shimizu F."/>
            <person name="Wakebe H."/>
            <person name="Hishigaki H."/>
            <person name="Watanabe T."/>
            <person name="Sugiyama A."/>
            <person name="Takemoto M."/>
            <person name="Kawakami B."/>
            <person name="Yamazaki M."/>
            <person name="Watanabe K."/>
            <person name="Kumagai A."/>
            <person name="Itakura S."/>
            <person name="Fukuzumi Y."/>
            <person name="Fujimori Y."/>
            <person name="Komiyama M."/>
            <person name="Tashiro H."/>
            <person name="Tanigami A."/>
            <person name="Fujiwara T."/>
            <person name="Ono T."/>
            <person name="Yamada K."/>
            <person name="Fujii Y."/>
            <person name="Ozaki K."/>
            <person name="Hirao M."/>
            <person name="Ohmori Y."/>
            <person name="Kawabata A."/>
            <person name="Hikiji T."/>
            <person name="Kobatake N."/>
            <person name="Inagaki H."/>
            <person name="Ikema Y."/>
            <person name="Okamoto S."/>
            <person name="Okitani R."/>
            <person name="Kawakami T."/>
            <person name="Noguchi S."/>
            <person name="Itoh T."/>
            <person name="Shigeta K."/>
            <person name="Senba T."/>
            <person name="Matsumura K."/>
            <person name="Nakajima Y."/>
            <person name="Mizuno T."/>
            <person name="Morinaga M."/>
            <person name="Sasaki M."/>
            <person name="Togashi T."/>
            <person name="Oyama M."/>
            <person name="Hata H."/>
            <person name="Watanabe M."/>
            <person name="Komatsu T."/>
            <person name="Mizushima-Sugano J."/>
            <person name="Satoh T."/>
            <person name="Shirai Y."/>
            <person name="Takahashi Y."/>
            <person name="Nakagawa K."/>
            <person name="Okumura K."/>
            <person name="Nagase T."/>
            <person name="Nomura N."/>
            <person name="Kikuchi H."/>
            <person name="Masuho Y."/>
            <person name="Yamashita R."/>
            <person name="Nakai K."/>
            <person name="Yada T."/>
            <person name="Nakamura Y."/>
            <person name="Ohara O."/>
            <person name="Isogai T."/>
            <person name="Sugano S."/>
        </authorList>
    </citation>
    <scope>NUCLEOTIDE SEQUENCE [LARGE SCALE MRNA] (ISOFORM 1)</scope>
    <scope>VARIANTS 184-HIS--LEU-354 DEL; ILE-442 AND 483-THR--THR-533 DEL</scope>
    <source>
        <tissue>Embryo</tissue>
        <tissue>Placenta</tissue>
    </source>
</reference>
<reference key="4">
    <citation type="journal article" date="2006" name="Nature">
        <title>The DNA sequence, annotation and analysis of human chromosome 3.</title>
        <authorList>
            <person name="Muzny D.M."/>
            <person name="Scherer S.E."/>
            <person name="Kaul R."/>
            <person name="Wang J."/>
            <person name="Yu J."/>
            <person name="Sudbrak R."/>
            <person name="Buhay C.J."/>
            <person name="Chen R."/>
            <person name="Cree A."/>
            <person name="Ding Y."/>
            <person name="Dugan-Rocha S."/>
            <person name="Gill R."/>
            <person name="Gunaratne P."/>
            <person name="Harris R.A."/>
            <person name="Hawes A.C."/>
            <person name="Hernandez J."/>
            <person name="Hodgson A.V."/>
            <person name="Hume J."/>
            <person name="Jackson A."/>
            <person name="Khan Z.M."/>
            <person name="Kovar-Smith C."/>
            <person name="Lewis L.R."/>
            <person name="Lozado R.J."/>
            <person name="Metzker M.L."/>
            <person name="Milosavljevic A."/>
            <person name="Miner G.R."/>
            <person name="Morgan M.B."/>
            <person name="Nazareth L.V."/>
            <person name="Scott G."/>
            <person name="Sodergren E."/>
            <person name="Song X.-Z."/>
            <person name="Steffen D."/>
            <person name="Wei S."/>
            <person name="Wheeler D.A."/>
            <person name="Wright M.W."/>
            <person name="Worley K.C."/>
            <person name="Yuan Y."/>
            <person name="Zhang Z."/>
            <person name="Adams C.Q."/>
            <person name="Ansari-Lari M.A."/>
            <person name="Ayele M."/>
            <person name="Brown M.J."/>
            <person name="Chen G."/>
            <person name="Chen Z."/>
            <person name="Clendenning J."/>
            <person name="Clerc-Blankenburg K.P."/>
            <person name="Chen R."/>
            <person name="Chen Z."/>
            <person name="Davis C."/>
            <person name="Delgado O."/>
            <person name="Dinh H.H."/>
            <person name="Dong W."/>
            <person name="Draper H."/>
            <person name="Ernst S."/>
            <person name="Fu G."/>
            <person name="Gonzalez-Garay M.L."/>
            <person name="Garcia D.K."/>
            <person name="Gillett W."/>
            <person name="Gu J."/>
            <person name="Hao B."/>
            <person name="Haugen E."/>
            <person name="Havlak P."/>
            <person name="He X."/>
            <person name="Hennig S."/>
            <person name="Hu S."/>
            <person name="Huang W."/>
            <person name="Jackson L.R."/>
            <person name="Jacob L.S."/>
            <person name="Kelly S.H."/>
            <person name="Kube M."/>
            <person name="Levy R."/>
            <person name="Li Z."/>
            <person name="Liu B."/>
            <person name="Liu J."/>
            <person name="Liu W."/>
            <person name="Lu J."/>
            <person name="Maheshwari M."/>
            <person name="Nguyen B.-V."/>
            <person name="Okwuonu G.O."/>
            <person name="Palmeiri A."/>
            <person name="Pasternak S."/>
            <person name="Perez L.M."/>
            <person name="Phelps K.A."/>
            <person name="Plopper F.J."/>
            <person name="Qiang B."/>
            <person name="Raymond C."/>
            <person name="Rodriguez R."/>
            <person name="Saenphimmachak C."/>
            <person name="Santibanez J."/>
            <person name="Shen H."/>
            <person name="Shen Y."/>
            <person name="Subramanian S."/>
            <person name="Tabor P.E."/>
            <person name="Verduzco D."/>
            <person name="Waldron L."/>
            <person name="Wang J."/>
            <person name="Wang J."/>
            <person name="Wang Q."/>
            <person name="Williams G.A."/>
            <person name="Wong G.K.-S."/>
            <person name="Yao Z."/>
            <person name="Zhang J."/>
            <person name="Zhang X."/>
            <person name="Zhao G."/>
            <person name="Zhou J."/>
            <person name="Zhou Y."/>
            <person name="Nelson D."/>
            <person name="Lehrach H."/>
            <person name="Reinhardt R."/>
            <person name="Naylor S.L."/>
            <person name="Yang H."/>
            <person name="Olson M."/>
            <person name="Weinstock G."/>
            <person name="Gibbs R.A."/>
        </authorList>
    </citation>
    <scope>NUCLEOTIDE SEQUENCE [LARGE SCALE GENOMIC DNA]</scope>
</reference>
<reference key="5">
    <citation type="journal article" date="2004" name="Genome Res.">
        <title>The status, quality, and expansion of the NIH full-length cDNA project: the Mammalian Gene Collection (MGC).</title>
        <authorList>
            <consortium name="The MGC Project Team"/>
        </authorList>
    </citation>
    <scope>NUCLEOTIDE SEQUENCE [LARGE SCALE MRNA] (ISOFORM 1)</scope>
    <scope>VARIANTS 184-HIS--LEU-354 DEL; 203-HIS--LEU-354 DEL; ILE-442 AND LEU-590</scope>
    <source>
        <tissue>Brain</tissue>
        <tissue>Colon</tissue>
    </source>
</reference>
<reference key="6">
    <citation type="journal article" date="2000" name="DNA Res.">
        <title>Prediction of the coding sequences of unidentified human genes. XVI. The complete sequences of 150 new cDNA clones from brain which code for large proteins in vitro.</title>
        <authorList>
            <person name="Nagase T."/>
            <person name="Kikuno R."/>
            <person name="Ishikawa K."/>
            <person name="Hirosawa M."/>
            <person name="Ohara O."/>
        </authorList>
    </citation>
    <scope>NUCLEOTIDE SEQUENCE [LARGE SCALE MRNA] OF 26-638 (ISOFORM 1)</scope>
    <scope>VARIANT 241-HIS--LEU-354 DEL</scope>
    <source>
        <tissue>Brain</tissue>
    </source>
</reference>
<reference key="7">
    <citation type="journal article" date="2004" name="Mol. Cell. Biol.">
        <title>MUC20 suppresses the hepatocyte growth factor-induced Grb2-Ras pathway by binding to a multifunctional docking site of met.</title>
        <authorList>
            <person name="Higuchi T."/>
            <person name="Orita T."/>
            <person name="Katsuya K."/>
            <person name="Yamasaki Y."/>
            <person name="Akiyama K."/>
            <person name="Li H."/>
            <person name="Yamamoto T."/>
            <person name="Saito Y."/>
            <person name="Nakamura M."/>
        </authorList>
    </citation>
    <scope>FUNCTION</scope>
    <scope>INTERACTION WITH MET</scope>
</reference>
<reference key="8">
    <citation type="journal article" date="2006" name="Am. J. Nephrol.">
        <title>Tandem repeats polymorphism of MUC20 is an independent factor for the progression of immunoglobulin A nephropathy.</title>
        <authorList>
            <person name="Li G."/>
            <person name="Zhang H."/>
            <person name="Lv J."/>
            <person name="Hou P."/>
            <person name="Wang H."/>
        </authorList>
    </citation>
    <scope>TANDEM REPEATS POLYMORPHISM</scope>
</reference>
<reference key="9">
    <citation type="journal article" date="2006" name="Hum. Reprod.">
        <title>Mucin gene expression in human male urogenital tract epithelia.</title>
        <authorList>
            <person name="Russo C.L."/>
            <person name="Spurr-Michaud S."/>
            <person name="Tisdale A."/>
            <person name="Pudney J."/>
            <person name="Anderson D."/>
            <person name="Gipson I.K."/>
        </authorList>
    </citation>
    <scope>TISSUE SPECIFICITY</scope>
</reference>
<protein>
    <recommendedName>
        <fullName>Mucin-20</fullName>
        <shortName>MUC-20</shortName>
    </recommendedName>
</protein>
<dbReference type="EMBL" id="AB098731">
    <property type="protein sequence ID" value="BAD06718.1"/>
    <property type="molecule type" value="mRNA"/>
</dbReference>
<dbReference type="EMBL" id="AB098733">
    <property type="protein sequence ID" value="BAD06720.1"/>
    <property type="molecule type" value="Genomic_DNA"/>
</dbReference>
<dbReference type="EMBL" id="AY358449">
    <property type="protein sequence ID" value="AAQ88814.1"/>
    <property type="status" value="ALT_FRAME"/>
    <property type="molecule type" value="mRNA"/>
</dbReference>
<dbReference type="EMBL" id="AK027314">
    <property type="protein sequence ID" value="BAB55035.1"/>
    <property type="molecule type" value="mRNA"/>
</dbReference>
<dbReference type="EMBL" id="AK075138">
    <property type="protein sequence ID" value="BAC11428.1"/>
    <property type="molecule type" value="mRNA"/>
</dbReference>
<dbReference type="EMBL" id="AC069513">
    <property type="status" value="NOT_ANNOTATED_CDS"/>
    <property type="molecule type" value="Genomic_DNA"/>
</dbReference>
<dbReference type="EMBL" id="BC029267">
    <property type="protein sequence ID" value="AAH29267.1"/>
    <property type="molecule type" value="mRNA"/>
</dbReference>
<dbReference type="EMBL" id="BC044243">
    <property type="protein sequence ID" value="AAH44243.1"/>
    <property type="molecule type" value="mRNA"/>
</dbReference>
<dbReference type="EMBL" id="AB037780">
    <property type="protein sequence ID" value="BAA92597.1"/>
    <property type="status" value="ALT_SEQ"/>
    <property type="molecule type" value="mRNA"/>
</dbReference>
<dbReference type="CCDS" id="CCDS63877.1">
    <molecule id="Q8N307-1"/>
</dbReference>
<dbReference type="RefSeq" id="NP_001269435.1">
    <molecule id="Q8N307-1"/>
    <property type="nucleotide sequence ID" value="NM_001282506.2"/>
</dbReference>
<dbReference type="RefSeq" id="NP_001278762.1">
    <property type="nucleotide sequence ID" value="NM_001291833.1"/>
</dbReference>
<dbReference type="RefSeq" id="NP_065841.1">
    <property type="nucleotide sequence ID" value="NM_020790.1"/>
</dbReference>
<dbReference type="RefSeq" id="NP_689886.3">
    <property type="nucleotide sequence ID" value="NM_152673.3"/>
</dbReference>
<dbReference type="BioGRID" id="128360">
    <property type="interactions" value="49"/>
</dbReference>
<dbReference type="FunCoup" id="Q8N307">
    <property type="interactions" value="67"/>
</dbReference>
<dbReference type="IntAct" id="Q8N307">
    <property type="interactions" value="23"/>
</dbReference>
<dbReference type="STRING" id="9606.ENSP00000414350"/>
<dbReference type="GlyCosmos" id="Q8N307">
    <property type="glycosylation" value="4 sites, 1 glycan"/>
</dbReference>
<dbReference type="GlyGen" id="Q8N307">
    <property type="glycosylation" value="14 sites, 2 O-linked glycans (10 sites)"/>
</dbReference>
<dbReference type="iPTMnet" id="Q8N307"/>
<dbReference type="PhosphoSitePlus" id="Q8N307"/>
<dbReference type="BioMuta" id="MUC20"/>
<dbReference type="DMDM" id="317373415"/>
<dbReference type="jPOST" id="Q8N307"/>
<dbReference type="MassIVE" id="Q8N307"/>
<dbReference type="PaxDb" id="9606-ENSP00000414350"/>
<dbReference type="PeptideAtlas" id="Q8N307"/>
<dbReference type="ProteomicsDB" id="71749">
    <molecule id="Q8N307-1"/>
</dbReference>
<dbReference type="ProteomicsDB" id="71750">
    <molecule id="Q8N307-3"/>
</dbReference>
<dbReference type="Antibodypedia" id="35139">
    <property type="antibodies" value="199 antibodies from 24 providers"/>
</dbReference>
<dbReference type="DNASU" id="200958"/>
<dbReference type="Ensembl" id="ENST00000445522.6">
    <molecule id="Q8N307-3"/>
    <property type="protein sequence ID" value="ENSP00000405629.2"/>
    <property type="gene ID" value="ENSG00000176945.18"/>
</dbReference>
<dbReference type="Ensembl" id="ENST00000447234.7">
    <molecule id="Q8N307-1"/>
    <property type="protein sequence ID" value="ENSP00000414350.2"/>
    <property type="gene ID" value="ENSG00000176945.18"/>
</dbReference>
<dbReference type="Ensembl" id="ENST00000610415.4">
    <molecule id="Q8N307-1"/>
    <property type="protein sequence ID" value="ENSP00000479947.1"/>
    <property type="gene ID" value="ENSG00000278114.4"/>
</dbReference>
<dbReference type="Ensembl" id="ENST00000615394.4">
    <molecule id="Q8N307-1"/>
    <property type="protein sequence ID" value="ENSP00000483878.1"/>
    <property type="gene ID" value="ENSG00000276583.4"/>
</dbReference>
<dbReference type="Ensembl" id="ENST00000620530.4">
    <molecule id="Q8N307-1"/>
    <property type="protein sequence ID" value="ENSP00000479182.1"/>
    <property type="gene ID" value="ENSG00000275501.4"/>
</dbReference>
<dbReference type="Ensembl" id="ENST00000625274.2">
    <molecule id="Q8N307-3"/>
    <property type="protein sequence ID" value="ENSP00000485837.1"/>
    <property type="gene ID" value="ENSG00000278114.4"/>
</dbReference>
<dbReference type="Ensembl" id="ENST00000627739.2">
    <molecule id="Q8N307-3"/>
    <property type="protein sequence ID" value="ENSP00000485855.1"/>
    <property type="gene ID" value="ENSG00000276583.4"/>
</dbReference>
<dbReference type="Ensembl" id="ENST00000630334.2">
    <molecule id="Q8N307-3"/>
    <property type="protein sequence ID" value="ENSP00000485921.1"/>
    <property type="gene ID" value="ENSG00000275501.4"/>
</dbReference>
<dbReference type="GeneID" id="200958"/>
<dbReference type="KEGG" id="hsa:200958"/>
<dbReference type="MANE-Select" id="ENST00000447234.7">
    <property type="protein sequence ID" value="ENSP00000414350.2"/>
    <property type="RefSeq nucleotide sequence ID" value="NM_001282506.2"/>
    <property type="RefSeq protein sequence ID" value="NP_001269435.1"/>
</dbReference>
<dbReference type="UCSC" id="uc032soi.2">
    <molecule id="Q8N307-1"/>
    <property type="organism name" value="human"/>
</dbReference>
<dbReference type="AGR" id="HGNC:23282"/>
<dbReference type="CTD" id="200958"/>
<dbReference type="DisGeNET" id="200958"/>
<dbReference type="GeneCards" id="MUC20"/>
<dbReference type="HGNC" id="HGNC:23282">
    <property type="gene designation" value="MUC20"/>
</dbReference>
<dbReference type="HPA" id="ENSG00000176945">
    <property type="expression patterns" value="Low tissue specificity"/>
</dbReference>
<dbReference type="MIM" id="610360">
    <property type="type" value="gene"/>
</dbReference>
<dbReference type="neXtProt" id="NX_Q8N307"/>
<dbReference type="OpenTargets" id="ENSG00000176945"/>
<dbReference type="PharmGKB" id="PA134939730"/>
<dbReference type="VEuPathDB" id="HostDB:ENSG00000176945"/>
<dbReference type="eggNOG" id="ENOG502SVUK">
    <property type="taxonomic scope" value="Eukaryota"/>
</dbReference>
<dbReference type="GeneTree" id="ENSGT00730000111453"/>
<dbReference type="InParanoid" id="Q8N307"/>
<dbReference type="OMA" id="SKFMVVI"/>
<dbReference type="OrthoDB" id="9451599at2759"/>
<dbReference type="PAN-GO" id="Q8N307">
    <property type="GO annotations" value="1 GO annotation based on evolutionary models"/>
</dbReference>
<dbReference type="PhylomeDB" id="Q8N307"/>
<dbReference type="TreeFam" id="TF338458"/>
<dbReference type="PathwayCommons" id="Q8N307"/>
<dbReference type="Reactome" id="R-HSA-5083625">
    <property type="pathway name" value="Defective GALNT3 causes HFTC"/>
</dbReference>
<dbReference type="Reactome" id="R-HSA-5083632">
    <property type="pathway name" value="Defective C1GALT1C1 causes TNPS"/>
</dbReference>
<dbReference type="Reactome" id="R-HSA-5083636">
    <property type="pathway name" value="Defective GALNT12 causes CRCS1"/>
</dbReference>
<dbReference type="Reactome" id="R-HSA-5621480">
    <property type="pathway name" value="Dectin-2 family"/>
</dbReference>
<dbReference type="Reactome" id="R-HSA-8851805">
    <property type="pathway name" value="MET activates RAS signaling"/>
</dbReference>
<dbReference type="Reactome" id="R-HSA-913709">
    <property type="pathway name" value="O-linked glycosylation of mucins"/>
</dbReference>
<dbReference type="Reactome" id="R-HSA-977068">
    <property type="pathway name" value="Termination of O-glycan biosynthesis"/>
</dbReference>
<dbReference type="SignaLink" id="Q8N307"/>
<dbReference type="BioGRID-ORCS" id="200958">
    <property type="hits" value="54 hits in 1103 CRISPR screens"/>
</dbReference>
<dbReference type="ChiTaRS" id="MUC20">
    <property type="organism name" value="human"/>
</dbReference>
<dbReference type="GeneWiki" id="MUC20"/>
<dbReference type="GenomeRNAi" id="200958"/>
<dbReference type="Pharos" id="Q8N307">
    <property type="development level" value="Tbio"/>
</dbReference>
<dbReference type="PRO" id="PR:Q8N307"/>
<dbReference type="Proteomes" id="UP000005640">
    <property type="component" value="Chromosome 3"/>
</dbReference>
<dbReference type="RNAct" id="Q8N307">
    <property type="molecule type" value="protein"/>
</dbReference>
<dbReference type="Bgee" id="ENSG00000176945">
    <property type="expression patterns" value="Expressed in right uterine tube and 117 other cell types or tissues"/>
</dbReference>
<dbReference type="ExpressionAtlas" id="Q8N307">
    <property type="expression patterns" value="baseline and differential"/>
</dbReference>
<dbReference type="GO" id="GO:0016324">
    <property type="term" value="C:apical plasma membrane"/>
    <property type="evidence" value="ECO:0007669"/>
    <property type="project" value="UniProtKB-SubCell"/>
</dbReference>
<dbReference type="GO" id="GO:0009925">
    <property type="term" value="C:basal plasma membrane"/>
    <property type="evidence" value="ECO:0000314"/>
    <property type="project" value="MGI"/>
</dbReference>
<dbReference type="GO" id="GO:0016323">
    <property type="term" value="C:basolateral plasma membrane"/>
    <property type="evidence" value="ECO:0007669"/>
    <property type="project" value="UniProtKB-SubCell"/>
</dbReference>
<dbReference type="GO" id="GO:0005576">
    <property type="term" value="C:extracellular region"/>
    <property type="evidence" value="ECO:0007669"/>
    <property type="project" value="UniProtKB-SubCell"/>
</dbReference>
<dbReference type="GO" id="GO:0005796">
    <property type="term" value="C:Golgi lumen"/>
    <property type="evidence" value="ECO:0000304"/>
    <property type="project" value="Reactome"/>
</dbReference>
<dbReference type="GO" id="GO:0031528">
    <property type="term" value="C:microvillus membrane"/>
    <property type="evidence" value="ECO:0007669"/>
    <property type="project" value="UniProtKB-SubCell"/>
</dbReference>
<dbReference type="GO" id="GO:0005886">
    <property type="term" value="C:plasma membrane"/>
    <property type="evidence" value="ECO:0000304"/>
    <property type="project" value="Reactome"/>
</dbReference>
<dbReference type="GO" id="GO:0042802">
    <property type="term" value="F:identical protein binding"/>
    <property type="evidence" value="ECO:0000353"/>
    <property type="project" value="MGI"/>
</dbReference>
<dbReference type="GO" id="GO:0048012">
    <property type="term" value="P:hepatocyte growth factor receptor signaling pathway"/>
    <property type="evidence" value="ECO:0000318"/>
    <property type="project" value="GO_Central"/>
</dbReference>
<dbReference type="InterPro" id="IPR054051">
    <property type="entry name" value="MUC-20_rpt"/>
</dbReference>
<dbReference type="InterPro" id="IPR034551">
    <property type="entry name" value="MUC20"/>
</dbReference>
<dbReference type="PANTHER" id="PTHR37358">
    <property type="entry name" value="MUCIN-20"/>
    <property type="match status" value="1"/>
</dbReference>
<dbReference type="PANTHER" id="PTHR37358:SF1">
    <property type="entry name" value="MUCIN-20"/>
    <property type="match status" value="1"/>
</dbReference>
<dbReference type="Pfam" id="PF21824">
    <property type="entry name" value="MUC20"/>
    <property type="match status" value="12"/>
</dbReference>
<keyword id="KW-0025">Alternative splicing</keyword>
<keyword id="KW-1003">Cell membrane</keyword>
<keyword id="KW-0966">Cell projection</keyword>
<keyword id="KW-0325">Glycoprotein</keyword>
<keyword id="KW-0472">Membrane</keyword>
<keyword id="KW-1267">Proteomics identification</keyword>
<keyword id="KW-1185">Reference proteome</keyword>
<keyword id="KW-0677">Repeat</keyword>
<keyword id="KW-0964">Secreted</keyword>
<keyword id="KW-0732">Signal</keyword>
<proteinExistence type="evidence at protein level"/>
<sequence length="709" mass="71982">MGCLWGLALPLFFFCWEVGVSGSSAGPSTRRADTAMTTDDTEVPAMTLAPGHAALETQTLSAETSSRASTPAGPIPEAETRGAKRISPARETRSFTKTSPNFMVLIATSVETSAASGSPEGAGMTTVQTITGSDPREAIFDTLCTDDSSEEAKTLTMDILTLAHTSTEAKGLSSESSASSDSPHPVITPSRASESSASSDGPHPVITPSRASESSASSDGPHPVITPSRASESSASSDGPHPVITPSRASESSASSDGPHPVITPSRASESSASSDGPHPVITPSRASESSASSDGPHPVITPSRASESSASSDGPHPVITPSRASESSASSDGPHPVITPSRASESSASSDGLHPVITPSRASESSASSDGPHPVITPSRASESSASSDGPHPVITPSWSPGSDVTLLAEALVTVTNIEVINCSITEIETTTSSIPGASDTDLIPTEGVKASSTSDPPALPDSTEAKPHITEVTASAETLSTAGTTESAAPDATVGTPLPTNSATEREVTAPGATTLSGALVTVSRNPLEETSALSVETPSYVKVSGAAPVSIEAGSAVGKTTSFAGSSASSYSPSEAALKNFTPSETPTMDIATKGPFPTSRDPLPSVPPTTTNSSRGTNSTLAKITTSAKTTMKPPTATPTTARTRPTTDVSAGENGGFLLLRLSVASPEDLTDPRVAERLMQQLHRELHAHAPHFQVSLLRVRRG</sequence>
<organism>
    <name type="scientific">Homo sapiens</name>
    <name type="common">Human</name>
    <dbReference type="NCBI Taxonomy" id="9606"/>
    <lineage>
        <taxon>Eukaryota</taxon>
        <taxon>Metazoa</taxon>
        <taxon>Chordata</taxon>
        <taxon>Craniata</taxon>
        <taxon>Vertebrata</taxon>
        <taxon>Euteleostomi</taxon>
        <taxon>Mammalia</taxon>
        <taxon>Eutheria</taxon>
        <taxon>Euarchontoglires</taxon>
        <taxon>Primates</taxon>
        <taxon>Haplorrhini</taxon>
        <taxon>Catarrhini</taxon>
        <taxon>Hominidae</taxon>
        <taxon>Homo</taxon>
    </lineage>
</organism>